<sequence length="296" mass="34899">MLSPKDILRKDLKLVHGYPMTCAFASNWEKIEQFHSRPDDIVIATYPKSGTTWVSEIIDMILNDGDIEKCKRGFITEKVPMLEMTLPGLRTSGIEQLEKNPSPRIVKTHLPTDLLPKSFWENNCKMIYLARNAKDVSVSYYHFDLMNNLQPFPGTWEEYLEKFLTGKVAYGSWFTHVKNWWKKKEEHPILFLYYEDMKENPKEEIKKIIRFLEKNLNDEILDRIIHHTSFEVMKDNPLVNYTHLPTTVMDHSKSPFMRKGTAGDWKNYFTVAQNEKFDAIYETEMSKTALQFRTEI</sequence>
<reference key="1">
    <citation type="journal article" date="1997" name="J. Biochem.">
        <title>Molecular cloning and characterization of rat ST1B1 and human ST1B2 cDNAs, encoding thyroid hormone sulfotransferases.</title>
        <authorList>
            <person name="Fujita K."/>
            <person name="Nagata K."/>
            <person name="Ozawa S."/>
            <person name="Sasano H."/>
            <person name="Yamazoe Y."/>
        </authorList>
    </citation>
    <scope>NUCLEOTIDE SEQUENCE [MRNA]</scope>
    <scope>FUNCTION</scope>
    <scope>CATALYTIC ACTIVITY</scope>
    <scope>BIOPHYSICOCHEMICAL PROPERTIES</scope>
    <scope>SUBCELLULAR LOCATION</scope>
    <source>
        <tissue>Liver</tissue>
    </source>
</reference>
<reference key="2">
    <citation type="journal article" date="1998" name="Mol. Pharmacol.">
        <title>Expression and characterization of a novel thyroid hormone-sulfating form of cytosolic sulfotransferase from human liver.</title>
        <authorList>
            <person name="Wang J."/>
            <person name="Falany J.L."/>
            <person name="Falany C.N."/>
        </authorList>
    </citation>
    <scope>NUCLEOTIDE SEQUENCE [MRNA]</scope>
    <scope>FUNCTION</scope>
    <scope>TISSUE SPECIFICITY</scope>
    <scope>SUBCELLULAR LOCATION</scope>
    <scope>CATALYTIC ACTIVITY</scope>
    <source>
        <tissue>Liver</tissue>
    </source>
</reference>
<reference key="3">
    <citation type="journal article" date="2004" name="Genome Res.">
        <title>The status, quality, and expansion of the NIH full-length cDNA project: the Mammalian Gene Collection (MGC).</title>
        <authorList>
            <consortium name="The MGC Project Team"/>
        </authorList>
    </citation>
    <scope>NUCLEOTIDE SEQUENCE [LARGE SCALE MRNA]</scope>
    <source>
        <tissue>Bone marrow</tissue>
    </source>
</reference>
<reference key="4">
    <citation type="submission" date="1999-09" db="EMBL/GenBank/DDBJ databases">
        <title>Mapping of the SULT1B2 gene to human chromosome 4q11-13.</title>
        <authorList>
            <person name="Falany C.N."/>
            <person name="Wang J."/>
        </authorList>
    </citation>
    <scope>NUCLEOTIDE SEQUENCE [GENOMIC DNA] OF 1-73</scope>
</reference>
<reference key="5">
    <citation type="journal article" date="2022" name="Nature">
        <title>A gut-derived metabolite alters brain activity and anxiety behaviour in mice.</title>
        <authorList>
            <person name="Needham B.D."/>
            <person name="Funabashi M."/>
            <person name="Adame M.D."/>
            <person name="Wang Z."/>
            <person name="Boktor J.C."/>
            <person name="Haney J."/>
            <person name="Wu W.L."/>
            <person name="Rabut C."/>
            <person name="Ladinsky M.S."/>
            <person name="Hwang S.J."/>
            <person name="Guo Y."/>
            <person name="Zhu Q."/>
            <person name="Griffiths J.A."/>
            <person name="Knight R."/>
            <person name="Bjorkman P.J."/>
            <person name="Shapiro M.G."/>
            <person name="Geschwind D.H."/>
            <person name="Holschneider D.P."/>
            <person name="Fischbach M.A."/>
            <person name="Mazmanian S.K."/>
        </authorList>
    </citation>
    <scope>FUNCTION</scope>
    <scope>CATALYTIC ACTIVITY</scope>
</reference>
<reference key="6">
    <citation type="journal article" date="2018" name="Xenobiotica">
        <title>A high frequency missense SULT1B1 allelic variant (L145V) selectively expressed in African descendants exhibits altered kinetic properties.</title>
        <authorList>
            <person name="Tibbs Z.E."/>
            <person name="Guidry A.L."/>
            <person name="Falany J.L."/>
            <person name="Kadlubar S.A."/>
            <person name="Falany C.N."/>
        </authorList>
    </citation>
    <scope>VARIANT VAL-145</scope>
    <scope>CATALYTIC ACTIVITY</scope>
    <scope>FUNCTION</scope>
    <scope>BIOPHYSICOCHEMICAL PROPERTIES</scope>
    <scope>CHARACTERIZATION OF VARIANT VAL-145</scope>
</reference>
<reference key="7">
    <citation type="journal article" date="2006" name="Proteins">
        <title>Crystal structures of human sulfotransferases SULT1B1 and SULT1C1 complexed with the cofactor product adenosine-3'- 5'-diphosphate (PAP).</title>
        <authorList>
            <person name="Dombrovski L."/>
            <person name="Dong A."/>
            <person name="Bochkarev A."/>
            <person name="Plotnikov A.N."/>
        </authorList>
    </citation>
    <scope>X-RAY CRYSTALLOGRAPHY (2.1 ANGSTROMS) IN COMPLEX WITH ADENOSINE-3'-5'-DIPHOSPHATE</scope>
</reference>
<reference key="8">
    <citation type="submission" date="2008-04" db="PDB data bank">
        <title>Crystal structure of human cytosolic sulfotransferase SULT1B1 in complex with PAP and resveratrol.</title>
        <authorList>
            <consortium name="Structural genomics consortium (SGC)"/>
        </authorList>
    </citation>
    <scope>X-RAY CRYSTALLOGRAPHY (2.0 ANGSTROMS) IN COMPLEX WITH ADENOSINE-3'-5'-DIPHOSPHATE AND RESVERATROL</scope>
</reference>
<name>ST1B1_HUMAN</name>
<dbReference type="EC" id="2.8.2.1" evidence="3 5 6"/>
<dbReference type="EMBL" id="D89479">
    <property type="protein sequence ID" value="BAA24547.1"/>
    <property type="molecule type" value="mRNA"/>
</dbReference>
<dbReference type="EMBL" id="U95726">
    <property type="protein sequence ID" value="AAB65154.1"/>
    <property type="molecule type" value="mRNA"/>
</dbReference>
<dbReference type="EMBL" id="BC010895">
    <property type="protein sequence ID" value="AAH10895.1"/>
    <property type="molecule type" value="mRNA"/>
</dbReference>
<dbReference type="EMBL" id="AF184894">
    <property type="protein sequence ID" value="AAF05917.1"/>
    <property type="molecule type" value="Genomic_DNA"/>
</dbReference>
<dbReference type="CCDS" id="CCDS3530.1"/>
<dbReference type="PIR" id="JC5885">
    <property type="entry name" value="JC5885"/>
</dbReference>
<dbReference type="RefSeq" id="NP_055280.2">
    <property type="nucleotide sequence ID" value="NM_014465.3"/>
</dbReference>
<dbReference type="RefSeq" id="XP_005265734.1">
    <property type="nucleotide sequence ID" value="XM_005265677.3"/>
</dbReference>
<dbReference type="PDB" id="2Z5F">
    <property type="method" value="X-ray"/>
    <property type="resolution" value="2.10 A"/>
    <property type="chains" value="A/B=1-296"/>
</dbReference>
<dbReference type="PDB" id="3CKL">
    <property type="method" value="X-ray"/>
    <property type="resolution" value="2.00 A"/>
    <property type="chains" value="A/B=1-296"/>
</dbReference>
<dbReference type="PDBsum" id="2Z5F"/>
<dbReference type="PDBsum" id="3CKL"/>
<dbReference type="SMR" id="O43704"/>
<dbReference type="BioGRID" id="118108">
    <property type="interactions" value="7"/>
</dbReference>
<dbReference type="FunCoup" id="O43704">
    <property type="interactions" value="308"/>
</dbReference>
<dbReference type="IntAct" id="O43704">
    <property type="interactions" value="7"/>
</dbReference>
<dbReference type="STRING" id="9606.ENSP00000308770"/>
<dbReference type="ChEMBL" id="CHEMBL1743294"/>
<dbReference type="DrugBank" id="DB01812">
    <property type="generic name" value="Adenosine 3',5'-diphosphate"/>
</dbReference>
<dbReference type="DrugBank" id="DB00714">
    <property type="generic name" value="Apomorphine"/>
</dbReference>
<dbReference type="DrugBank" id="DB14635">
    <property type="generic name" value="Curcumin sulfate"/>
</dbReference>
<dbReference type="DrugBank" id="DB12243">
    <property type="generic name" value="Edaravone"/>
</dbReference>
<dbReference type="DrugBank" id="DB12471">
    <property type="generic name" value="Ibrexafungerp"/>
</dbReference>
<dbReference type="DrugBank" id="DB00968">
    <property type="generic name" value="Methyldopa"/>
</dbReference>
<dbReference type="DrugBank" id="DB00960">
    <property type="generic name" value="Pindolol"/>
</dbReference>
<dbReference type="DrugBank" id="DB00867">
    <property type="generic name" value="Ritodrine"/>
</dbReference>
<dbReference type="DrugBank" id="DB00871">
    <property type="generic name" value="Terbutaline"/>
</dbReference>
<dbReference type="DrugBank" id="DB09100">
    <property type="generic name" value="Thyroid, porcine"/>
</dbReference>
<dbReference type="GlyCosmos" id="O43704">
    <property type="glycosylation" value="1 site, 1 glycan"/>
</dbReference>
<dbReference type="GlyGen" id="O43704">
    <property type="glycosylation" value="1 site, 1 O-linked glycan (1 site)"/>
</dbReference>
<dbReference type="iPTMnet" id="O43704"/>
<dbReference type="PhosphoSitePlus" id="O43704"/>
<dbReference type="BioMuta" id="SULT1B1"/>
<dbReference type="jPOST" id="O43704"/>
<dbReference type="MassIVE" id="O43704"/>
<dbReference type="PaxDb" id="9606-ENSP00000308770"/>
<dbReference type="PeptideAtlas" id="O43704"/>
<dbReference type="ProteomicsDB" id="49124"/>
<dbReference type="Antibodypedia" id="951">
    <property type="antibodies" value="214 antibodies from 25 providers"/>
</dbReference>
<dbReference type="DNASU" id="27284"/>
<dbReference type="Ensembl" id="ENST00000310613.8">
    <property type="protein sequence ID" value="ENSP00000308770.2"/>
    <property type="gene ID" value="ENSG00000173597.9"/>
</dbReference>
<dbReference type="GeneID" id="27284"/>
<dbReference type="KEGG" id="hsa:27284"/>
<dbReference type="MANE-Select" id="ENST00000310613.8">
    <property type="protein sequence ID" value="ENSP00000308770.2"/>
    <property type="RefSeq nucleotide sequence ID" value="NM_014465.4"/>
    <property type="RefSeq protein sequence ID" value="NP_055280.2"/>
</dbReference>
<dbReference type="UCSC" id="uc003hen.4">
    <property type="organism name" value="human"/>
</dbReference>
<dbReference type="AGR" id="HGNC:17845"/>
<dbReference type="CTD" id="27284"/>
<dbReference type="DisGeNET" id="27284"/>
<dbReference type="GeneCards" id="SULT1B1"/>
<dbReference type="HGNC" id="HGNC:17845">
    <property type="gene designation" value="SULT1B1"/>
</dbReference>
<dbReference type="HPA" id="ENSG00000173597">
    <property type="expression patterns" value="Tissue enhanced (intestine, stomach)"/>
</dbReference>
<dbReference type="MIM" id="608436">
    <property type="type" value="gene"/>
</dbReference>
<dbReference type="neXtProt" id="NX_O43704"/>
<dbReference type="OpenTargets" id="ENSG00000173597"/>
<dbReference type="PharmGKB" id="PA415"/>
<dbReference type="VEuPathDB" id="HostDB:ENSG00000173597"/>
<dbReference type="eggNOG" id="KOG1584">
    <property type="taxonomic scope" value="Eukaryota"/>
</dbReference>
<dbReference type="GeneTree" id="ENSGT00940000161848"/>
<dbReference type="HOGENOM" id="CLU_027239_1_2_1"/>
<dbReference type="InParanoid" id="O43704"/>
<dbReference type="OMA" id="IIYLCRE"/>
<dbReference type="OrthoDB" id="205623at2759"/>
<dbReference type="PAN-GO" id="O43704">
    <property type="GO annotations" value="3 GO annotations based on evolutionary models"/>
</dbReference>
<dbReference type="PhylomeDB" id="O43704"/>
<dbReference type="TreeFam" id="TF321745"/>
<dbReference type="BRENDA" id="2.8.2.1">
    <property type="organism ID" value="2681"/>
</dbReference>
<dbReference type="BRENDA" id="2.8.2.2">
    <property type="organism ID" value="2681"/>
</dbReference>
<dbReference type="PathwayCommons" id="O43704"/>
<dbReference type="Reactome" id="R-HSA-156584">
    <property type="pathway name" value="Cytosolic sulfonation of small molecules"/>
</dbReference>
<dbReference type="SignaLink" id="O43704"/>
<dbReference type="BioGRID-ORCS" id="27284">
    <property type="hits" value="7 hits in 1154 CRISPR screens"/>
</dbReference>
<dbReference type="EvolutionaryTrace" id="O43704"/>
<dbReference type="GeneWiki" id="SULT1B1"/>
<dbReference type="GenomeRNAi" id="27284"/>
<dbReference type="Pharos" id="O43704">
    <property type="development level" value="Tbio"/>
</dbReference>
<dbReference type="PRO" id="PR:O43704"/>
<dbReference type="Proteomes" id="UP000005640">
    <property type="component" value="Chromosome 4"/>
</dbReference>
<dbReference type="RNAct" id="O43704">
    <property type="molecule type" value="protein"/>
</dbReference>
<dbReference type="Bgee" id="ENSG00000173597">
    <property type="expression patterns" value="Expressed in rectum and 112 other cell types or tissues"/>
</dbReference>
<dbReference type="ExpressionAtlas" id="O43704">
    <property type="expression patterns" value="baseline and differential"/>
</dbReference>
<dbReference type="GO" id="GO:0005737">
    <property type="term" value="C:cytoplasm"/>
    <property type="evidence" value="ECO:0000318"/>
    <property type="project" value="GO_Central"/>
</dbReference>
<dbReference type="GO" id="GO:0005829">
    <property type="term" value="C:cytosol"/>
    <property type="evidence" value="ECO:0000304"/>
    <property type="project" value="Reactome"/>
</dbReference>
<dbReference type="GO" id="GO:0004062">
    <property type="term" value="F:aryl sulfotransferase activity"/>
    <property type="evidence" value="ECO:0000314"/>
    <property type="project" value="UniProtKB"/>
</dbReference>
<dbReference type="GO" id="GO:0008146">
    <property type="term" value="F:sulfotransferase activity"/>
    <property type="evidence" value="ECO:0000314"/>
    <property type="project" value="UniProtKB"/>
</dbReference>
<dbReference type="GO" id="GO:0050427">
    <property type="term" value="P:3'-phosphoadenosine 5'-phosphosulfate metabolic process"/>
    <property type="evidence" value="ECO:0000314"/>
    <property type="project" value="CAFA"/>
</dbReference>
<dbReference type="GO" id="GO:0006576">
    <property type="term" value="P:biogenic amine metabolic process"/>
    <property type="evidence" value="ECO:0000304"/>
    <property type="project" value="ProtInc"/>
</dbReference>
<dbReference type="GO" id="GO:0030855">
    <property type="term" value="P:epithelial cell differentiation"/>
    <property type="evidence" value="ECO:0000270"/>
    <property type="project" value="UniProtKB"/>
</dbReference>
<dbReference type="GO" id="GO:0006068">
    <property type="term" value="P:ethanol catabolic process"/>
    <property type="evidence" value="ECO:0000314"/>
    <property type="project" value="CAFA"/>
</dbReference>
<dbReference type="GO" id="GO:0009812">
    <property type="term" value="P:flavonoid metabolic process"/>
    <property type="evidence" value="ECO:0000314"/>
    <property type="project" value="BHF-UCL"/>
</dbReference>
<dbReference type="GO" id="GO:0018958">
    <property type="term" value="P:phenol-containing compound metabolic process"/>
    <property type="evidence" value="ECO:0000314"/>
    <property type="project" value="UniProtKB"/>
</dbReference>
<dbReference type="GO" id="GO:0051923">
    <property type="term" value="P:sulfation"/>
    <property type="evidence" value="ECO:0000314"/>
    <property type="project" value="UniProtKB"/>
</dbReference>
<dbReference type="GO" id="GO:0042403">
    <property type="term" value="P:thyroid hormone metabolic process"/>
    <property type="evidence" value="ECO:0000314"/>
    <property type="project" value="UniProtKB"/>
</dbReference>
<dbReference type="GO" id="GO:0006805">
    <property type="term" value="P:xenobiotic metabolic process"/>
    <property type="evidence" value="ECO:0000314"/>
    <property type="project" value="BHF-UCL"/>
</dbReference>
<dbReference type="FunFam" id="3.40.50.300:FF:000433">
    <property type="entry name" value="Estrogen sulfotransferase"/>
    <property type="match status" value="1"/>
</dbReference>
<dbReference type="Gene3D" id="3.40.50.300">
    <property type="entry name" value="P-loop containing nucleotide triphosphate hydrolases"/>
    <property type="match status" value="1"/>
</dbReference>
<dbReference type="InterPro" id="IPR027417">
    <property type="entry name" value="P-loop_NTPase"/>
</dbReference>
<dbReference type="InterPro" id="IPR000863">
    <property type="entry name" value="Sulfotransferase_dom"/>
</dbReference>
<dbReference type="PANTHER" id="PTHR11783">
    <property type="entry name" value="SULFOTRANSFERASE SULT"/>
    <property type="match status" value="1"/>
</dbReference>
<dbReference type="Pfam" id="PF00685">
    <property type="entry name" value="Sulfotransfer_1"/>
    <property type="match status" value="1"/>
</dbReference>
<dbReference type="SUPFAM" id="SSF52540">
    <property type="entry name" value="P-loop containing nucleoside triphosphate hydrolases"/>
    <property type="match status" value="1"/>
</dbReference>
<accession>O43704</accession>
<accession>O15497</accession>
<accession>Q96FI1</accession>
<accession>Q9UK34</accession>
<evidence type="ECO:0000250" key="1"/>
<evidence type="ECO:0000269" key="2">
    <source>
    </source>
</evidence>
<evidence type="ECO:0000269" key="3">
    <source>
    </source>
</evidence>
<evidence type="ECO:0000269" key="4">
    <source>
    </source>
</evidence>
<evidence type="ECO:0000269" key="5">
    <source>
    </source>
</evidence>
<evidence type="ECO:0000269" key="6">
    <source>
    </source>
</evidence>
<evidence type="ECO:0000269" key="7">
    <source ref="8"/>
</evidence>
<evidence type="ECO:0000303" key="8">
    <source>
    </source>
</evidence>
<evidence type="ECO:0000305" key="9"/>
<evidence type="ECO:0000305" key="10">
    <source>
    </source>
</evidence>
<evidence type="ECO:0000305" key="11">
    <source>
    </source>
</evidence>
<evidence type="ECO:0000305" key="12">
    <source>
    </source>
</evidence>
<evidence type="ECO:0007744" key="13">
    <source>
        <dbReference type="PDB" id="2Z5F"/>
    </source>
</evidence>
<evidence type="ECO:0007744" key="14">
    <source>
        <dbReference type="PDB" id="3CKL"/>
    </source>
</evidence>
<evidence type="ECO:0007829" key="15">
    <source>
        <dbReference type="PDB" id="2Z5F"/>
    </source>
</evidence>
<evidence type="ECO:0007829" key="16">
    <source>
        <dbReference type="PDB" id="3CKL"/>
    </source>
</evidence>
<keyword id="KW-0002">3D-structure</keyword>
<keyword id="KW-0963">Cytoplasm</keyword>
<keyword id="KW-1267">Proteomics identification</keyword>
<keyword id="KW-1185">Reference proteome</keyword>
<keyword id="KW-0808">Transferase</keyword>
<organism>
    <name type="scientific">Homo sapiens</name>
    <name type="common">Human</name>
    <dbReference type="NCBI Taxonomy" id="9606"/>
    <lineage>
        <taxon>Eukaryota</taxon>
        <taxon>Metazoa</taxon>
        <taxon>Chordata</taxon>
        <taxon>Craniata</taxon>
        <taxon>Vertebrata</taxon>
        <taxon>Euteleostomi</taxon>
        <taxon>Mammalia</taxon>
        <taxon>Eutheria</taxon>
        <taxon>Euarchontoglires</taxon>
        <taxon>Primates</taxon>
        <taxon>Haplorrhini</taxon>
        <taxon>Catarrhini</taxon>
        <taxon>Hominidae</taxon>
        <taxon>Homo</taxon>
    </lineage>
</organism>
<gene>
    <name type="primary">SULT1B1</name>
    <name evidence="8" type="synonym">ST1B2</name>
    <name type="synonym">SULT1B2</name>
</gene>
<proteinExistence type="evidence at protein level"/>
<comment type="function">
    <text evidence="3 4 5 6">Sulfotransferase that utilizes 3'-phospho-5'-adenylyl sulfate (PAPS) as sulfonate donor to catalyze the sulfate conjugation of dopamine, small phenols such as 1-naphthol and p-nitrophenol and thyroid hormones, including 3,3'-diiodothyronine, triidothyronine (T3) and reverse triiodothyronine (rT3) (PubMed:28084139, PubMed:9443824, PubMed:9463486). May play a role in gut microbiota-host metabolic interaction. O-sulfonates 4-ethylphenol (4-EP), a dietary tyrosine-derived metabolite produced by gut bacteria. The product 4-EPS crosses the blood-brain barrier and may negatively regulate oligodendrocyte maturation and myelination, affecting the functional connectivity of different brain regions associated with the limbic system (PubMed:35165440).</text>
</comment>
<comment type="catalytic activity">
    <reaction evidence="3 5 6">
        <text>a phenol + 3'-phosphoadenylyl sulfate = an aryl sulfate + adenosine 3',5'-bisphosphate + H(+)</text>
        <dbReference type="Rhea" id="RHEA:12164"/>
        <dbReference type="ChEBI" id="CHEBI:15378"/>
        <dbReference type="ChEBI" id="CHEBI:33853"/>
        <dbReference type="ChEBI" id="CHEBI:58339"/>
        <dbReference type="ChEBI" id="CHEBI:58343"/>
        <dbReference type="ChEBI" id="CHEBI:140317"/>
        <dbReference type="EC" id="2.8.2.1"/>
    </reaction>
    <physiologicalReaction direction="left-to-right" evidence="11">
        <dbReference type="Rhea" id="RHEA:12165"/>
    </physiologicalReaction>
</comment>
<comment type="catalytic activity">
    <reaction evidence="5 6">
        <text>3,3',5-triiodo-L-thyronine + 3'-phosphoadenylyl sulfate = 3,3',5-triiodo-L-thyronine sulfate + adenosine 3',5'-bisphosphate + H(+)</text>
        <dbReference type="Rhea" id="RHEA:67876"/>
        <dbReference type="ChEBI" id="CHEBI:15378"/>
        <dbReference type="ChEBI" id="CHEBI:58339"/>
        <dbReference type="ChEBI" id="CHEBI:58343"/>
        <dbReference type="ChEBI" id="CHEBI:176511"/>
        <dbReference type="ChEBI" id="CHEBI:533015"/>
    </reaction>
    <physiologicalReaction direction="left-to-right" evidence="12">
        <dbReference type="Rhea" id="RHEA:67877"/>
    </physiologicalReaction>
</comment>
<comment type="catalytic activity">
    <reaction evidence="6">
        <text>3,3',5'-triiodo-L-thyronine + 3'-phosphoadenylyl sulfate = 3,3',5'-triiodo-L-thyronine sulfate + adenosine 3',5'-bisphosphate + H(+)</text>
        <dbReference type="Rhea" id="RHEA:67888"/>
        <dbReference type="ChEBI" id="CHEBI:15378"/>
        <dbReference type="ChEBI" id="CHEBI:57261"/>
        <dbReference type="ChEBI" id="CHEBI:58339"/>
        <dbReference type="ChEBI" id="CHEBI:58343"/>
        <dbReference type="ChEBI" id="CHEBI:176513"/>
    </reaction>
    <physiologicalReaction direction="left-to-right" evidence="12">
        <dbReference type="Rhea" id="RHEA:67889"/>
    </physiologicalReaction>
</comment>
<comment type="catalytic activity">
    <reaction evidence="6">
        <text>3,3'-diiodo-L-thyronine + 3'-phosphoadenylyl sulfate = 3,3'-diiodo-L-thyronine sulfate + adenosine 3',5'-bisphosphate + H(+)</text>
        <dbReference type="Rhea" id="RHEA:67892"/>
        <dbReference type="ChEBI" id="CHEBI:15378"/>
        <dbReference type="ChEBI" id="CHEBI:58339"/>
        <dbReference type="ChEBI" id="CHEBI:58343"/>
        <dbReference type="ChEBI" id="CHEBI:176514"/>
        <dbReference type="ChEBI" id="CHEBI:176515"/>
    </reaction>
    <physiologicalReaction direction="left-to-right" evidence="12">
        <dbReference type="Rhea" id="RHEA:67893"/>
    </physiologicalReaction>
</comment>
<comment type="catalytic activity">
    <reaction evidence="5">
        <text>dopamine + 3'-phosphoadenylyl sulfate = dopamine 3-O-sulfate + adenosine 3',5'-bisphosphate + H(+)</text>
        <dbReference type="Rhea" id="RHEA:67880"/>
        <dbReference type="ChEBI" id="CHEBI:15378"/>
        <dbReference type="ChEBI" id="CHEBI:58339"/>
        <dbReference type="ChEBI" id="CHEBI:58343"/>
        <dbReference type="ChEBI" id="CHEBI:59905"/>
        <dbReference type="ChEBI" id="CHEBI:133524"/>
    </reaction>
    <physiologicalReaction direction="left-to-right" evidence="11">
        <dbReference type="Rhea" id="RHEA:67881"/>
    </physiologicalReaction>
</comment>
<comment type="catalytic activity">
    <reaction evidence="5">
        <text>dopamine + 3'-phosphoadenylyl sulfate = dopamine 4-O-sulfate + adenosine 3',5'-bisphosphate + H(+)</text>
        <dbReference type="Rhea" id="RHEA:67884"/>
        <dbReference type="ChEBI" id="CHEBI:15378"/>
        <dbReference type="ChEBI" id="CHEBI:58339"/>
        <dbReference type="ChEBI" id="CHEBI:58343"/>
        <dbReference type="ChEBI" id="CHEBI:59905"/>
        <dbReference type="ChEBI" id="CHEBI:133529"/>
    </reaction>
    <physiologicalReaction direction="left-to-right" evidence="11">
        <dbReference type="Rhea" id="RHEA:67885"/>
    </physiologicalReaction>
</comment>
<comment type="catalytic activity">
    <reaction evidence="4">
        <text>4-ethylphenol + 3'-phosphoadenylyl sulfate = 4-ethylphenyl sulfate + adenosine 3',5'-bisphosphate + H(+)</text>
        <dbReference type="Rhea" id="RHEA:70607"/>
        <dbReference type="ChEBI" id="CHEBI:15378"/>
        <dbReference type="ChEBI" id="CHEBI:49584"/>
        <dbReference type="ChEBI" id="CHEBI:58339"/>
        <dbReference type="ChEBI" id="CHEBI:58343"/>
        <dbReference type="ChEBI" id="CHEBI:133681"/>
    </reaction>
    <physiologicalReaction direction="left-to-right" evidence="10">
        <dbReference type="Rhea" id="RHEA:70608"/>
    </physiologicalReaction>
</comment>
<comment type="biophysicochemical properties">
    <kinetics>
        <KM evidence="5">63.5 uM for 3,3',5-triiodo-L-thyronine (T3)</KM>
        <KM evidence="3">7.2 uM for p-nitrophenol</KM>
        <KM evidence="5">24.1 uM for p-nitrophenol</KM>
        <KM evidence="3">1.4 uM for 1-naphtol</KM>
        <KM evidence="6">141 uM for 3,3',5'-triiodo-L-thyronine (rT3)</KM>
        <KM evidence="6">1.4 uM for 3,3'-diiodo-L-thyronine (T2)</KM>
        <KM evidence="6">1.2 uM for PAPS</KM>
        <KM evidence="3">1.3 uM for PAPS</KM>
        <KM evidence="6">23 uM for thyroxine (T4)</KM>
        <Vmax evidence="3">5.1 nmol/min/mg enzyme with p-nitrophenol as substrate</Vmax>
    </kinetics>
</comment>
<comment type="interaction">
    <interactant intactId="EBI-10179062">
        <id>O43704</id>
    </interactant>
    <interactant intactId="EBI-752420">
        <id>Q9NUX5</id>
        <label>POT1</label>
    </interactant>
    <organismsDiffer>false</organismsDiffer>
    <experiments>2</experiments>
</comment>
<comment type="interaction">
    <interactant intactId="EBI-10179062">
        <id>O43704</id>
    </interactant>
    <interactant intactId="EBI-727004">
        <id>O00560</id>
        <label>SDCBP</label>
    </interactant>
    <organismsDiffer>false</organismsDiffer>
    <experiments>3</experiments>
</comment>
<comment type="interaction">
    <interactant intactId="EBI-10179062">
        <id>O43704</id>
    </interactant>
    <interactant intactId="EBI-3921363">
        <id>Q06520</id>
        <label>SULT2A1</label>
    </interactant>
    <organismsDiffer>false</organismsDiffer>
    <experiments>6</experiments>
</comment>
<comment type="interaction">
    <interactant intactId="EBI-10179062">
        <id>O43704</id>
    </interactant>
    <interactant intactId="EBI-749441">
        <id>O00204</id>
        <label>SULT2B1</label>
    </interactant>
    <organismsDiffer>false</organismsDiffer>
    <experiments>9</experiments>
</comment>
<comment type="interaction">
    <interactant intactId="EBI-10179062">
        <id>O43704</id>
    </interactant>
    <interactant intactId="EBI-1042683">
        <id>P26639</id>
        <label>TARS1</label>
    </interactant>
    <organismsDiffer>false</organismsDiffer>
    <experiments>3</experiments>
</comment>
<comment type="interaction">
    <interactant intactId="EBI-10179062">
        <id>O43704</id>
    </interactant>
    <interactant intactId="EBI-1052596">
        <id>P31930</id>
        <label>UQCRC1</label>
    </interactant>
    <organismsDiffer>false</organismsDiffer>
    <experiments>3</experiments>
</comment>
<comment type="interaction">
    <interactant intactId="EBI-10179062">
        <id>O43704</id>
    </interactant>
    <interactant intactId="EBI-357430">
        <id>P61758</id>
        <label>VBP1</label>
    </interactant>
    <organismsDiffer>false</organismsDiffer>
    <experiments>3</experiments>
</comment>
<comment type="subcellular location">
    <subcellularLocation>
        <location evidence="5 6">Cytoplasm</location>
    </subcellularLocation>
</comment>
<comment type="tissue specificity">
    <text evidence="6">Highly expressed in the liver, peripheral blood leukocytes, colon (mucosal lining), small intestine (jejunum) and spleen. A lesser expression was observed in the lung, placenta and thymus.</text>
</comment>
<comment type="similarity">
    <text evidence="9">Belongs to the sulfotransferase 1 family.</text>
</comment>
<protein>
    <recommendedName>
        <fullName evidence="8">Sulfotransferase 1B1</fullName>
        <shortName>ST1B1</shortName>
        <ecNumber evidence="3 5 6">2.8.2.1</ecNumber>
    </recommendedName>
    <alternativeName>
        <fullName evidence="8">Sulfotransferase 1B2</fullName>
    </alternativeName>
    <alternativeName>
        <fullName>Sulfotransferase family cytosolic 1B member 1</fullName>
    </alternativeName>
    <alternativeName>
        <fullName>Thyroid hormone sulfotransferase</fullName>
    </alternativeName>
</protein>
<feature type="chain" id="PRO_0000085161" description="Sulfotransferase 1B1">
    <location>
        <begin position="1"/>
        <end position="296"/>
    </location>
</feature>
<feature type="active site" description="Proton acceptor" evidence="1">
    <location>
        <position position="109"/>
    </location>
</feature>
<feature type="binding site" evidence="2 7 13 14">
    <location>
        <begin position="48"/>
        <end position="53"/>
    </location>
    <ligand>
        <name>3'-phosphoadenylyl sulfate</name>
        <dbReference type="ChEBI" id="CHEBI:58339"/>
    </ligand>
</feature>
<feature type="binding site" evidence="1">
    <location>
        <begin position="107"/>
        <end position="109"/>
    </location>
    <ligand>
        <name>substrate</name>
    </ligand>
</feature>
<feature type="binding site" evidence="2 7 13 14">
    <location>
        <position position="131"/>
    </location>
    <ligand>
        <name>3'-phosphoadenylyl sulfate</name>
        <dbReference type="ChEBI" id="CHEBI:58339"/>
    </ligand>
</feature>
<feature type="binding site" evidence="2 7 13 14">
    <location>
        <position position="139"/>
    </location>
    <ligand>
        <name>3'-phosphoadenylyl sulfate</name>
        <dbReference type="ChEBI" id="CHEBI:58339"/>
    </ligand>
</feature>
<feature type="binding site" evidence="2 7 13 14">
    <location>
        <position position="194"/>
    </location>
    <ligand>
        <name>3'-phosphoadenylyl sulfate</name>
        <dbReference type="ChEBI" id="CHEBI:58339"/>
    </ligand>
</feature>
<feature type="binding site" evidence="2 7 13 14">
    <location>
        <begin position="228"/>
        <end position="233"/>
    </location>
    <ligand>
        <name>3'-phosphoadenylyl sulfate</name>
        <dbReference type="ChEBI" id="CHEBI:58339"/>
    </ligand>
</feature>
<feature type="binding site" evidence="2 7 13 14">
    <location>
        <begin position="258"/>
        <end position="260"/>
    </location>
    <ligand>
        <name>3'-phosphoadenylyl sulfate</name>
        <dbReference type="ChEBI" id="CHEBI:58339"/>
    </ligand>
</feature>
<feature type="sequence variant" id="VAR_085176" description="Reduces Vmax with p-nitrophenol as substrate; binds to adenosine 3',5'-bisphosphate with a dissociation constant (Kd) value increases 4-fold compared with wild-type; binds to PAPS with a dissociation constant (Kd) value similar to wild-type; dbSNP:rs11569736." evidence="3">
    <original>L</original>
    <variation>V</variation>
    <location>
        <position position="145"/>
    </location>
</feature>
<feature type="sequence conflict" description="In Ref. 3; AAH10895." evidence="9" ref="3">
    <original>K</original>
    <variation>R</variation>
    <location>
        <position position="183"/>
    </location>
</feature>
<feature type="sequence conflict" description="In Ref. 1; BAA24547." evidence="9" ref="1">
    <original>E</original>
    <variation>G</variation>
    <location>
        <position position="186"/>
    </location>
</feature>
<feature type="turn" evidence="15">
    <location>
        <begin position="5"/>
        <end position="9"/>
    </location>
</feature>
<feature type="strand" evidence="16">
    <location>
        <begin position="13"/>
        <end position="15"/>
    </location>
</feature>
<feature type="strand" evidence="16">
    <location>
        <begin position="18"/>
        <end position="20"/>
    </location>
</feature>
<feature type="helix" evidence="16">
    <location>
        <begin position="22"/>
        <end position="25"/>
    </location>
</feature>
<feature type="helix" evidence="16">
    <location>
        <begin position="29"/>
        <end position="32"/>
    </location>
</feature>
<feature type="strand" evidence="16">
    <location>
        <begin position="41"/>
        <end position="46"/>
    </location>
</feature>
<feature type="helix" evidence="16">
    <location>
        <begin position="51"/>
        <end position="62"/>
    </location>
</feature>
<feature type="turn" evidence="16">
    <location>
        <begin position="63"/>
        <end position="65"/>
    </location>
</feature>
<feature type="helix" evidence="16">
    <location>
        <begin position="67"/>
        <end position="70"/>
    </location>
</feature>
<feature type="helix" evidence="16">
    <location>
        <begin position="75"/>
        <end position="78"/>
    </location>
</feature>
<feature type="turn" evidence="15">
    <location>
        <begin position="87"/>
        <end position="89"/>
    </location>
</feature>
<feature type="helix" evidence="16">
    <location>
        <begin position="93"/>
        <end position="99"/>
    </location>
</feature>
<feature type="strand" evidence="16">
    <location>
        <begin position="105"/>
        <end position="108"/>
    </location>
</feature>
<feature type="turn" evidence="16">
    <location>
        <begin position="112"/>
        <end position="114"/>
    </location>
</feature>
<feature type="helix" evidence="16">
    <location>
        <begin position="117"/>
        <end position="121"/>
    </location>
</feature>
<feature type="strand" evidence="16">
    <location>
        <begin position="125"/>
        <end position="130"/>
    </location>
</feature>
<feature type="helix" evidence="16">
    <location>
        <begin position="133"/>
        <end position="146"/>
    </location>
</feature>
<feature type="helix" evidence="16">
    <location>
        <begin position="156"/>
        <end position="165"/>
    </location>
</feature>
<feature type="helix" evidence="16">
    <location>
        <begin position="173"/>
        <end position="182"/>
    </location>
</feature>
<feature type="turn" evidence="16">
    <location>
        <begin position="183"/>
        <end position="186"/>
    </location>
</feature>
<feature type="strand" evidence="16">
    <location>
        <begin position="189"/>
        <end position="193"/>
    </location>
</feature>
<feature type="helix" evidence="16">
    <location>
        <begin position="194"/>
        <end position="199"/>
    </location>
</feature>
<feature type="helix" evidence="16">
    <location>
        <begin position="201"/>
        <end position="211"/>
    </location>
</feature>
<feature type="helix" evidence="16">
    <location>
        <begin position="218"/>
        <end position="227"/>
    </location>
</feature>
<feature type="helix" evidence="16">
    <location>
        <begin position="230"/>
        <end position="234"/>
    </location>
</feature>
<feature type="turn" evidence="16">
    <location>
        <begin position="237"/>
        <end position="239"/>
    </location>
</feature>
<feature type="turn" evidence="16">
    <location>
        <begin position="246"/>
        <end position="248"/>
    </location>
</feature>
<feature type="turn" evidence="16">
    <location>
        <begin position="251"/>
        <end position="253"/>
    </location>
</feature>
<feature type="helix" evidence="16">
    <location>
        <begin position="264"/>
        <end position="267"/>
    </location>
</feature>
<feature type="helix" evidence="16">
    <location>
        <begin position="271"/>
        <end position="285"/>
    </location>
</feature>